<accession>P16807</accession>
<organismHost>
    <name type="scientific">Homo sapiens</name>
    <name type="common">Human</name>
    <dbReference type="NCBI Taxonomy" id="9606"/>
</organismHost>
<dbReference type="EMBL" id="X17403">
    <property type="protein sequence ID" value="CAA35457.1"/>
    <property type="molecule type" value="Genomic_DNA"/>
</dbReference>
<dbReference type="EMBL" id="X17403">
    <property type="protein sequence ID" value="CAA35301.1"/>
    <property type="molecule type" value="Genomic_DNA"/>
</dbReference>
<dbReference type="PIR" id="S09758">
    <property type="entry name" value="S09758"/>
</dbReference>
<dbReference type="Proteomes" id="UP000008991">
    <property type="component" value="Segment"/>
</dbReference>
<sequence length="143" mass="15909">KQRTVPRCFCCGSLQFPHHRPGLRRHRKNTTRSHAAVDRPRRTRRGDASPRPTGCGGERRAPAIPGGATSPHMSRRSGRGPVGDGREASRTAAEEKRRRKENYRQGPGFLLEKQHVGQDPDANGNHDDDDHAGQDAAHQCRIQ</sequence>
<proteinExistence type="predicted"/>
<reference key="1">
    <citation type="journal article" date="1990" name="Curr. Top. Microbiol. Immunol.">
        <title>Analysis of the protein-coding content of the sequence of human cytomegalovirus strain AD169.</title>
        <authorList>
            <person name="Chee M.S."/>
            <person name="Bankier A.T."/>
            <person name="Beck S."/>
            <person name="Bohni R."/>
            <person name="Brown C.M."/>
            <person name="Cerny R."/>
            <person name="Horsnell T."/>
            <person name="Hutchison C.A. III"/>
            <person name="Kouzarides T."/>
            <person name="Martignetti J.A."/>
            <person name="Preddie E."/>
            <person name="Satchwell S.C."/>
            <person name="Tomlinson P."/>
            <person name="Weston K.M."/>
            <person name="Barrell B.G."/>
        </authorList>
    </citation>
    <scope>NUCLEOTIDE SEQUENCE [LARGE SCALE GENOMIC DNA]</scope>
</reference>
<evidence type="ECO:0000256" key="1">
    <source>
        <dbReference type="SAM" id="MobiDB-lite"/>
    </source>
</evidence>
<protein>
    <recommendedName>
        <fullName>Uncharacterized protein IRL9</fullName>
        <shortName>TRL9</shortName>
    </recommendedName>
</protein>
<name>IR09_HCMVA</name>
<organism>
    <name type="scientific">Human cytomegalovirus (strain AD169)</name>
    <name type="common">HHV-5</name>
    <name type="synonym">Human herpesvirus 5</name>
    <dbReference type="NCBI Taxonomy" id="10360"/>
    <lineage>
        <taxon>Viruses</taxon>
        <taxon>Duplodnaviria</taxon>
        <taxon>Heunggongvirae</taxon>
        <taxon>Peploviricota</taxon>
        <taxon>Herviviricetes</taxon>
        <taxon>Herpesvirales</taxon>
        <taxon>Orthoherpesviridae</taxon>
        <taxon>Betaherpesvirinae</taxon>
        <taxon>Cytomegalovirus</taxon>
        <taxon>Cytomegalovirus humanbeta5</taxon>
        <taxon>Human cytomegalovirus</taxon>
    </lineage>
</organism>
<feature type="chain" id="PRO_0000115257" description="Uncharacterized protein IRL9">
    <location>
        <begin position="1"/>
        <end position="143"/>
    </location>
</feature>
<feature type="region of interest" description="Disordered" evidence="1">
    <location>
        <begin position="13"/>
        <end position="143"/>
    </location>
</feature>
<feature type="compositionally biased region" description="Basic residues" evidence="1">
    <location>
        <begin position="17"/>
        <end position="31"/>
    </location>
</feature>
<feature type="compositionally biased region" description="Basic and acidic residues" evidence="1">
    <location>
        <begin position="35"/>
        <end position="48"/>
    </location>
</feature>
<feature type="compositionally biased region" description="Basic and acidic residues" evidence="1">
    <location>
        <begin position="84"/>
        <end position="96"/>
    </location>
</feature>
<feature type="compositionally biased region" description="Basic and acidic residues" evidence="1">
    <location>
        <begin position="112"/>
        <end position="133"/>
    </location>
</feature>
<feature type="compositionally biased region" description="Low complexity" evidence="1">
    <location>
        <begin position="134"/>
        <end position="143"/>
    </location>
</feature>